<protein>
    <recommendedName>
        <fullName evidence="1">Large ribosomal subunit protein uL3</fullName>
    </recommendedName>
    <alternativeName>
        <fullName evidence="2">50S ribosomal protein L3</fullName>
    </alternativeName>
</protein>
<dbReference type="EMBL" id="CP000109">
    <property type="protein sequence ID" value="ABB40891.1"/>
    <property type="molecule type" value="Genomic_DNA"/>
</dbReference>
<dbReference type="SMR" id="Q31IY2"/>
<dbReference type="STRING" id="317025.Tcr_0295"/>
<dbReference type="KEGG" id="tcx:Tcr_0295"/>
<dbReference type="eggNOG" id="COG0087">
    <property type="taxonomic scope" value="Bacteria"/>
</dbReference>
<dbReference type="HOGENOM" id="CLU_044142_4_1_6"/>
<dbReference type="OrthoDB" id="9806135at2"/>
<dbReference type="GO" id="GO:0022625">
    <property type="term" value="C:cytosolic large ribosomal subunit"/>
    <property type="evidence" value="ECO:0007669"/>
    <property type="project" value="TreeGrafter"/>
</dbReference>
<dbReference type="GO" id="GO:0019843">
    <property type="term" value="F:rRNA binding"/>
    <property type="evidence" value="ECO:0007669"/>
    <property type="project" value="UniProtKB-UniRule"/>
</dbReference>
<dbReference type="GO" id="GO:0003735">
    <property type="term" value="F:structural constituent of ribosome"/>
    <property type="evidence" value="ECO:0007669"/>
    <property type="project" value="InterPro"/>
</dbReference>
<dbReference type="GO" id="GO:0006412">
    <property type="term" value="P:translation"/>
    <property type="evidence" value="ECO:0007669"/>
    <property type="project" value="UniProtKB-UniRule"/>
</dbReference>
<dbReference type="FunFam" id="2.40.30.10:FF:000004">
    <property type="entry name" value="50S ribosomal protein L3"/>
    <property type="match status" value="1"/>
</dbReference>
<dbReference type="FunFam" id="3.30.160.810:FF:000001">
    <property type="entry name" value="50S ribosomal protein L3"/>
    <property type="match status" value="1"/>
</dbReference>
<dbReference type="Gene3D" id="3.30.160.810">
    <property type="match status" value="1"/>
</dbReference>
<dbReference type="Gene3D" id="2.40.30.10">
    <property type="entry name" value="Translation factors"/>
    <property type="match status" value="1"/>
</dbReference>
<dbReference type="HAMAP" id="MF_01325_B">
    <property type="entry name" value="Ribosomal_uL3_B"/>
    <property type="match status" value="1"/>
</dbReference>
<dbReference type="InterPro" id="IPR000597">
    <property type="entry name" value="Ribosomal_uL3"/>
</dbReference>
<dbReference type="InterPro" id="IPR019927">
    <property type="entry name" value="Ribosomal_uL3_bac/org-type"/>
</dbReference>
<dbReference type="InterPro" id="IPR019926">
    <property type="entry name" value="Ribosomal_uL3_CS"/>
</dbReference>
<dbReference type="InterPro" id="IPR009000">
    <property type="entry name" value="Transl_B-barrel_sf"/>
</dbReference>
<dbReference type="NCBIfam" id="TIGR03625">
    <property type="entry name" value="L3_bact"/>
    <property type="match status" value="1"/>
</dbReference>
<dbReference type="PANTHER" id="PTHR11229">
    <property type="entry name" value="50S RIBOSOMAL PROTEIN L3"/>
    <property type="match status" value="1"/>
</dbReference>
<dbReference type="PANTHER" id="PTHR11229:SF16">
    <property type="entry name" value="LARGE RIBOSOMAL SUBUNIT PROTEIN UL3C"/>
    <property type="match status" value="1"/>
</dbReference>
<dbReference type="Pfam" id="PF00297">
    <property type="entry name" value="Ribosomal_L3"/>
    <property type="match status" value="1"/>
</dbReference>
<dbReference type="SUPFAM" id="SSF50447">
    <property type="entry name" value="Translation proteins"/>
    <property type="match status" value="1"/>
</dbReference>
<dbReference type="PROSITE" id="PS00474">
    <property type="entry name" value="RIBOSOMAL_L3"/>
    <property type="match status" value="1"/>
</dbReference>
<comment type="function">
    <text evidence="1">One of the primary rRNA binding proteins, it binds directly near the 3'-end of the 23S rRNA, where it nucleates assembly of the 50S subunit.</text>
</comment>
<comment type="subunit">
    <text evidence="1">Part of the 50S ribosomal subunit. Forms a cluster with proteins L14 and L19.</text>
</comment>
<comment type="PTM">
    <text evidence="1">Methylated by PrmB.</text>
</comment>
<comment type="similarity">
    <text evidence="1">Belongs to the universal ribosomal protein uL3 family.</text>
</comment>
<proteinExistence type="inferred from homology"/>
<feature type="chain" id="PRO_0000241430" description="Large ribosomal subunit protein uL3">
    <location>
        <begin position="1"/>
        <end position="212"/>
    </location>
</feature>
<feature type="modified residue" description="N5-methylglutamine" evidence="1">
    <location>
        <position position="154"/>
    </location>
</feature>
<organism>
    <name type="scientific">Hydrogenovibrio crunogenus (strain DSM 25203 / XCL-2)</name>
    <name type="common">Thiomicrospira crunogena</name>
    <dbReference type="NCBI Taxonomy" id="317025"/>
    <lineage>
        <taxon>Bacteria</taxon>
        <taxon>Pseudomonadati</taxon>
        <taxon>Pseudomonadota</taxon>
        <taxon>Gammaproteobacteria</taxon>
        <taxon>Thiotrichales</taxon>
        <taxon>Piscirickettsiaceae</taxon>
        <taxon>Hydrogenovibrio</taxon>
    </lineage>
</organism>
<evidence type="ECO:0000255" key="1">
    <source>
        <dbReference type="HAMAP-Rule" id="MF_01325"/>
    </source>
</evidence>
<evidence type="ECO:0000305" key="2"/>
<sequence>MGIGVIGTKVGMTRVFNEDGVSTPVTVVEVSPNRITQIKNNETDGYDAIQVTFGSKHAGRVSKPEAGHYAKAGVEAGQGLWEFRLDDVSEVEGLEPGSEITVEKFNDVAVVDVSGTTKGKGFQGGVKRHNFKMQDATHGNSVSHRAPGSIGQNQTPGRVFKGKKMAGHMGNVKQTTLNLELVKVDVENSLLLIKGALPGAKGSTVIVRKAIK</sequence>
<name>RL3_HYDCU</name>
<accession>Q31IY2</accession>
<keyword id="KW-0488">Methylation</keyword>
<keyword id="KW-0687">Ribonucleoprotein</keyword>
<keyword id="KW-0689">Ribosomal protein</keyword>
<keyword id="KW-0694">RNA-binding</keyword>
<keyword id="KW-0699">rRNA-binding</keyword>
<gene>
    <name evidence="1" type="primary">rplC</name>
    <name type="ordered locus">Tcr_0295</name>
</gene>
<reference key="1">
    <citation type="journal article" date="2006" name="PLoS Biol.">
        <title>The genome of deep-sea vent chemolithoautotroph Thiomicrospira crunogena XCL-2.</title>
        <authorList>
            <person name="Scott K.M."/>
            <person name="Sievert S.M."/>
            <person name="Abril F.N."/>
            <person name="Ball L.A."/>
            <person name="Barrett C.J."/>
            <person name="Blake R.A."/>
            <person name="Boller A.J."/>
            <person name="Chain P.S.G."/>
            <person name="Clark J.A."/>
            <person name="Davis C.R."/>
            <person name="Detter C."/>
            <person name="Do K.F."/>
            <person name="Dobrinski K.P."/>
            <person name="Faza B.I."/>
            <person name="Fitzpatrick K.A."/>
            <person name="Freyermuth S.K."/>
            <person name="Harmer T.L."/>
            <person name="Hauser L.J."/>
            <person name="Huegler M."/>
            <person name="Kerfeld C.A."/>
            <person name="Klotz M.G."/>
            <person name="Kong W.W."/>
            <person name="Land M."/>
            <person name="Lapidus A."/>
            <person name="Larimer F.W."/>
            <person name="Longo D.L."/>
            <person name="Lucas S."/>
            <person name="Malfatti S.A."/>
            <person name="Massey S.E."/>
            <person name="Martin D.D."/>
            <person name="McCuddin Z."/>
            <person name="Meyer F."/>
            <person name="Moore J.L."/>
            <person name="Ocampo L.H. Jr."/>
            <person name="Paul J.H."/>
            <person name="Paulsen I.T."/>
            <person name="Reep D.K."/>
            <person name="Ren Q."/>
            <person name="Ross R.L."/>
            <person name="Sato P.Y."/>
            <person name="Thomas P."/>
            <person name="Tinkham L.E."/>
            <person name="Zeruth G.T."/>
        </authorList>
    </citation>
    <scope>NUCLEOTIDE SEQUENCE [LARGE SCALE GENOMIC DNA]</scope>
    <source>
        <strain>DSM 25203 / XCL-2</strain>
    </source>
</reference>